<protein>
    <recommendedName>
        <fullName evidence="5">Cytochrome P450 monooxygenase ptmQ</fullName>
        <ecNumber evidence="4">1.-.-.-</ecNumber>
    </recommendedName>
    <alternativeName>
        <fullName evidence="5">Penitrem biosynthesis cluster 1 protein Q</fullName>
    </alternativeName>
</protein>
<name>PTMQ_PENOH</name>
<keyword id="KW-0325">Glycoprotein</keyword>
<keyword id="KW-0349">Heme</keyword>
<keyword id="KW-0408">Iron</keyword>
<keyword id="KW-0472">Membrane</keyword>
<keyword id="KW-0479">Metal-binding</keyword>
<keyword id="KW-0503">Monooxygenase</keyword>
<keyword id="KW-0560">Oxidoreductase</keyword>
<keyword id="KW-0812">Transmembrane</keyword>
<keyword id="KW-1133">Transmembrane helix</keyword>
<organism>
    <name type="scientific">Penicillium ochrochloron</name>
    <dbReference type="NCBI Taxonomy" id="69780"/>
    <lineage>
        <taxon>Eukaryota</taxon>
        <taxon>Fungi</taxon>
        <taxon>Dikarya</taxon>
        <taxon>Ascomycota</taxon>
        <taxon>Pezizomycotina</taxon>
        <taxon>Eurotiomycetes</taxon>
        <taxon>Eurotiomycetidae</taxon>
        <taxon>Eurotiales</taxon>
        <taxon>Aspergillaceae</taxon>
        <taxon>Penicillium</taxon>
    </lineage>
</organism>
<accession>A0A140JWT0</accession>
<comment type="function">
    <text evidence="4">Cytochrome P450 monooxygenase; part of the gene cluster that mediates the biosynthesis of the indole diterpenes penitrems (PubMed:25831977). The geranylgeranyl diphosphate (GGPP) synthase ptmG catalyzes the first step in penitrem biosynthesis via conversion of farnesyl pyrophosphate and isopentyl pyrophosphate into geranylgeranyl pyrophosphate (GGPP) (PubMed:25831977). Condensation of indole-3-glycerol phosphate with GGPP by the prenyl transferase ptmC then forms 3-geranylgeranylindole (3-GGI) (PubMed:25831977). Epoxidation by the FAD-dependent monooxygenase ptmM leads to a epoxidized-GGI that is substrate of the terpene cyclase ptmB for cyclization to yield paspaline (PubMed:25831977). Paspaline is subsequently converted to 13-desoxypaxilline by the cytochrome P450 monooxygenase ptmP, the latter being then converted to paxilline by the cytochrome P450 monooxygenase ptmQ (PubMed:25831977). Paxilline is converted to beta-paxitriol via C-10 ketoreduction by the short-chain dehydrogenase ptmH which can be monoprenylated at the C-20 by the indole diterpene prenyltransferase ptmD (PubMed:25831977). A two-step elimination (acetylation and elimination) process performed by the O-acetyltransferase ptmV and ptmI leads to the production of the prenylated form of penijanthine (PubMed:25831977). The FAD-linked oxidoreductase ptmO then converts the prenylated form of penijanthine into PC-M5 which is in turn transformed into PC-M4 by the aromatic dimethylallyltransferase ptmE (PubMed:25831977). Five sequential oxidative transformations performed by the cytochrome P450 monooxygenases ptmK, ptmU, ptmL, ptmN and ptmJ yield the various penitrem compounds. PtmK, ptmU and ptmM are involved in the formation of the key bicyclic ring of penitrem C via the formation of the intermediates secopenitrem D and penitrem D. PtmL catalyzes the epoxidation of penitrem D and C to yield penitrem B and F, respectively. PtmJ catalyzes the last benzylic hydroxylation to convert penitrem B to prenitrem E and penitrem F to penitrem A (PubMed:25831977).</text>
</comment>
<comment type="cofactor">
    <cofactor evidence="1">
        <name>heme</name>
        <dbReference type="ChEBI" id="CHEBI:30413"/>
    </cofactor>
</comment>
<comment type="pathway">
    <text evidence="4">Secondary metabolite biosynthesis.</text>
</comment>
<comment type="subcellular location">
    <subcellularLocation>
        <location evidence="2">Membrane</location>
        <topology evidence="2">Single-pass membrane protein</topology>
    </subcellularLocation>
</comment>
<comment type="similarity">
    <text evidence="6">Belongs to the cytochrome P450 family.</text>
</comment>
<dbReference type="EC" id="1.-.-.-" evidence="4"/>
<dbReference type="EMBL" id="LC027936">
    <property type="protein sequence ID" value="BAU61557.1"/>
    <property type="molecule type" value="Genomic_DNA"/>
</dbReference>
<dbReference type="SMR" id="A0A140JWT0"/>
<dbReference type="GlyCosmos" id="A0A140JWT0">
    <property type="glycosylation" value="2 sites, No reported glycans"/>
</dbReference>
<dbReference type="GO" id="GO:0016020">
    <property type="term" value="C:membrane"/>
    <property type="evidence" value="ECO:0007669"/>
    <property type="project" value="UniProtKB-SubCell"/>
</dbReference>
<dbReference type="GO" id="GO:0020037">
    <property type="term" value="F:heme binding"/>
    <property type="evidence" value="ECO:0007669"/>
    <property type="project" value="InterPro"/>
</dbReference>
<dbReference type="GO" id="GO:0005506">
    <property type="term" value="F:iron ion binding"/>
    <property type="evidence" value="ECO:0007669"/>
    <property type="project" value="InterPro"/>
</dbReference>
<dbReference type="GO" id="GO:0004497">
    <property type="term" value="F:monooxygenase activity"/>
    <property type="evidence" value="ECO:0007669"/>
    <property type="project" value="UniProtKB-KW"/>
</dbReference>
<dbReference type="GO" id="GO:0016705">
    <property type="term" value="F:oxidoreductase activity, acting on paired donors, with incorporation or reduction of molecular oxygen"/>
    <property type="evidence" value="ECO:0007669"/>
    <property type="project" value="InterPro"/>
</dbReference>
<dbReference type="GO" id="GO:0043386">
    <property type="term" value="P:mycotoxin biosynthetic process"/>
    <property type="evidence" value="ECO:0007669"/>
    <property type="project" value="UniProtKB-ARBA"/>
</dbReference>
<dbReference type="CDD" id="cd11041">
    <property type="entry name" value="CYP503A1-like"/>
    <property type="match status" value="1"/>
</dbReference>
<dbReference type="Gene3D" id="1.10.630.10">
    <property type="entry name" value="Cytochrome P450"/>
    <property type="match status" value="1"/>
</dbReference>
<dbReference type="InterPro" id="IPR001128">
    <property type="entry name" value="Cyt_P450"/>
</dbReference>
<dbReference type="InterPro" id="IPR017972">
    <property type="entry name" value="Cyt_P450_CS"/>
</dbReference>
<dbReference type="InterPro" id="IPR002401">
    <property type="entry name" value="Cyt_P450_E_grp-I"/>
</dbReference>
<dbReference type="InterPro" id="IPR036396">
    <property type="entry name" value="Cyt_P450_sf"/>
</dbReference>
<dbReference type="PANTHER" id="PTHR46206">
    <property type="entry name" value="CYTOCHROME P450"/>
    <property type="match status" value="1"/>
</dbReference>
<dbReference type="PANTHER" id="PTHR46206:SF5">
    <property type="entry name" value="P450, PUTATIVE (EUROFUNG)-RELATED"/>
    <property type="match status" value="1"/>
</dbReference>
<dbReference type="Pfam" id="PF00067">
    <property type="entry name" value="p450"/>
    <property type="match status" value="1"/>
</dbReference>
<dbReference type="PRINTS" id="PR00463">
    <property type="entry name" value="EP450I"/>
</dbReference>
<dbReference type="SUPFAM" id="SSF48264">
    <property type="entry name" value="Cytochrome P450"/>
    <property type="match status" value="1"/>
</dbReference>
<dbReference type="PROSITE" id="PS00086">
    <property type="entry name" value="CYTOCHROME_P450"/>
    <property type="match status" value="1"/>
</dbReference>
<proteinExistence type="inferred from homology"/>
<feature type="chain" id="PRO_0000446575" description="Cytochrome P450 monooxygenase ptmQ">
    <location>
        <begin position="1"/>
        <end position="514"/>
    </location>
</feature>
<feature type="transmembrane region" description="Helical" evidence="2">
    <location>
        <begin position="3"/>
        <end position="23"/>
    </location>
</feature>
<feature type="binding site" description="axial binding residue" evidence="1">
    <location>
        <position position="452"/>
    </location>
    <ligand>
        <name>heme</name>
        <dbReference type="ChEBI" id="CHEBI:30413"/>
    </ligand>
    <ligandPart>
        <name>Fe</name>
        <dbReference type="ChEBI" id="CHEBI:18248"/>
    </ligandPart>
</feature>
<feature type="glycosylation site" description="N-linked (GlcNAc...) asparagine" evidence="3">
    <location>
        <position position="148"/>
    </location>
</feature>
<feature type="glycosylation site" description="N-linked (GlcNAc...) asparagine" evidence="3">
    <location>
        <position position="486"/>
    </location>
</feature>
<gene>
    <name evidence="5" type="primary">ptmQ</name>
</gene>
<sequence>MDYVAQSPWIATLIVTATTYCTLRWVQYWRSWVNVPVVGRRGFLGSWISTILWTWEARGCIQKGYEKNKDFAFQVSTPNGWEVCICNDDMIKEYKNLMDDQMSALAVTSETFQAKYTLPGADWDAVHKLVPQPALAKSLMWLRNRAANDTDPYFPDFVRAFQRAFKEEIQVEQDGPFEWQSFPCFPRYSRVVAALTVKALLGSLANRPELIDLLCEYAEVIPLDGFFIALFPAILKPIVAFFCKAPRLSDRLVKVITEEIARRELENKHRIPEDMTDWMAQWVKDNPGYSIESAVVRVIATFFGGIHTTTQLTVHTLLEIATRPEYVDPLRQEITTALKAHGGWTKSAIESMTKLDSFIKEAQRFNPLDAASLARQATRDFQFSNGLKLPRGTWVFAPNGPMLFDESLYPAGSQFDGLRFWKLAEQTQRPHDYRLVTASSKYLQFGDGRHTCPGRFMAADEIRLIVAHTLFHFDIAIKNHGPRPRNTTFKKICFPDMSAEIMLRPRKLHGSEGN</sequence>
<reference key="1">
    <citation type="journal article" date="2015" name="Angew. Chem. Int. Ed.">
        <title>Reconstitution of biosynthetic machinery for the synthesis of the highly elaborated indole diterpene penitrem.</title>
        <authorList>
            <person name="Liu C."/>
            <person name="Tagami K."/>
            <person name="Minami A."/>
            <person name="Matsumoto T."/>
            <person name="Frisvad J.C."/>
            <person name="Suzuki H."/>
            <person name="Ishikawa J."/>
            <person name="Gomi K."/>
            <person name="Oikawa H."/>
        </authorList>
    </citation>
    <scope>NUCLEOTIDE SEQUENCE [GENOMIC DNA]</scope>
    <scope>IDENTIFICATION</scope>
    <scope>FUNCTION</scope>
    <scope>PATHWAY</scope>
    <source>
        <strain>ATCC 90288 / AK-40</strain>
    </source>
</reference>
<evidence type="ECO:0000250" key="1">
    <source>
        <dbReference type="UniProtKB" id="P04798"/>
    </source>
</evidence>
<evidence type="ECO:0000255" key="2"/>
<evidence type="ECO:0000255" key="3">
    <source>
        <dbReference type="PROSITE-ProRule" id="PRU00498"/>
    </source>
</evidence>
<evidence type="ECO:0000269" key="4">
    <source>
    </source>
</evidence>
<evidence type="ECO:0000303" key="5">
    <source>
    </source>
</evidence>
<evidence type="ECO:0000305" key="6"/>